<comment type="function">
    <text evidence="1">Required for rescue of stalled ribosomes mediated by trans-translation. Binds to transfer-messenger RNA (tmRNA), required for stable association of tmRNA with ribosomes. tmRNA and SmpB together mimic tRNA shape, replacing the anticodon stem-loop with SmpB. tmRNA is encoded by the ssrA gene; the 2 termini fold to resemble tRNA(Ala) and it encodes a 'tag peptide', a short internal open reading frame. During trans-translation Ala-aminoacylated tmRNA acts like a tRNA, entering the A-site of stalled ribosomes, displacing the stalled mRNA. The ribosome then switches to translate the ORF on the tmRNA; the nascent peptide is terminated with the 'tag peptide' encoded by the tmRNA and targeted for degradation. The ribosome is freed to recommence translation, which seems to be the essential function of trans-translation.</text>
</comment>
<comment type="subcellular location">
    <subcellularLocation>
        <location evidence="1">Cytoplasm</location>
    </subcellularLocation>
    <text evidence="1">The tmRNA-SmpB complex associates with stalled 70S ribosomes.</text>
</comment>
<comment type="similarity">
    <text evidence="1">Belongs to the SmpB family.</text>
</comment>
<feature type="chain" id="PRO_0000331105" description="SsrA-binding protein">
    <location>
        <begin position="1"/>
        <end position="157"/>
    </location>
</feature>
<name>SSRP_SYNWW</name>
<keyword id="KW-0963">Cytoplasm</keyword>
<keyword id="KW-1185">Reference proteome</keyword>
<keyword id="KW-0694">RNA-binding</keyword>
<sequence>MGKKGKGIKPVVDNRRARYEYHIKENLEAGLVLVGTEVKSLRMGKANLRDAYAVVKDGEIWVNNFHISPYDKGNQFNHDPLRPKKLLLHRREINRLYALQREKGLTLIPLKIYFKEGRAKMDLAVAVGKKLYDKREDIASRDAWRDMERSLKERNRA</sequence>
<reference key="1">
    <citation type="journal article" date="2010" name="Environ. Microbiol.">
        <title>The genome of Syntrophomonas wolfei: new insights into syntrophic metabolism and biohydrogen production.</title>
        <authorList>
            <person name="Sieber J.R."/>
            <person name="Sims D.R."/>
            <person name="Han C."/>
            <person name="Kim E."/>
            <person name="Lykidis A."/>
            <person name="Lapidus A.L."/>
            <person name="McDonnald E."/>
            <person name="Rohlin L."/>
            <person name="Culley D.E."/>
            <person name="Gunsalus R."/>
            <person name="McInerney M.J."/>
        </authorList>
    </citation>
    <scope>NUCLEOTIDE SEQUENCE [LARGE SCALE GENOMIC DNA]</scope>
    <source>
        <strain>DSM 2245B / Goettingen</strain>
    </source>
</reference>
<organism>
    <name type="scientific">Syntrophomonas wolfei subsp. wolfei (strain DSM 2245B / Goettingen)</name>
    <dbReference type="NCBI Taxonomy" id="335541"/>
    <lineage>
        <taxon>Bacteria</taxon>
        <taxon>Bacillati</taxon>
        <taxon>Bacillota</taxon>
        <taxon>Clostridia</taxon>
        <taxon>Eubacteriales</taxon>
        <taxon>Syntrophomonadaceae</taxon>
        <taxon>Syntrophomonas</taxon>
    </lineage>
</organism>
<proteinExistence type="inferred from homology"/>
<dbReference type="EMBL" id="CP000448">
    <property type="protein sequence ID" value="ABI67629.1"/>
    <property type="molecule type" value="Genomic_DNA"/>
</dbReference>
<dbReference type="RefSeq" id="WP_011639738.1">
    <property type="nucleotide sequence ID" value="NC_008346.1"/>
</dbReference>
<dbReference type="SMR" id="Q0B075"/>
<dbReference type="STRING" id="335541.Swol_0281"/>
<dbReference type="KEGG" id="swo:Swol_0281"/>
<dbReference type="eggNOG" id="COG0691">
    <property type="taxonomic scope" value="Bacteria"/>
</dbReference>
<dbReference type="HOGENOM" id="CLU_108953_0_1_9"/>
<dbReference type="OrthoDB" id="9805462at2"/>
<dbReference type="Proteomes" id="UP000001968">
    <property type="component" value="Chromosome"/>
</dbReference>
<dbReference type="GO" id="GO:0005829">
    <property type="term" value="C:cytosol"/>
    <property type="evidence" value="ECO:0007669"/>
    <property type="project" value="TreeGrafter"/>
</dbReference>
<dbReference type="GO" id="GO:0003723">
    <property type="term" value="F:RNA binding"/>
    <property type="evidence" value="ECO:0007669"/>
    <property type="project" value="UniProtKB-UniRule"/>
</dbReference>
<dbReference type="GO" id="GO:0070929">
    <property type="term" value="P:trans-translation"/>
    <property type="evidence" value="ECO:0007669"/>
    <property type="project" value="UniProtKB-UniRule"/>
</dbReference>
<dbReference type="CDD" id="cd09294">
    <property type="entry name" value="SmpB"/>
    <property type="match status" value="1"/>
</dbReference>
<dbReference type="Gene3D" id="2.40.280.10">
    <property type="match status" value="1"/>
</dbReference>
<dbReference type="HAMAP" id="MF_00023">
    <property type="entry name" value="SmpB"/>
    <property type="match status" value="1"/>
</dbReference>
<dbReference type="InterPro" id="IPR023620">
    <property type="entry name" value="SmpB"/>
</dbReference>
<dbReference type="InterPro" id="IPR000037">
    <property type="entry name" value="SsrA-bd_prot"/>
</dbReference>
<dbReference type="InterPro" id="IPR020081">
    <property type="entry name" value="SsrA-bd_prot_CS"/>
</dbReference>
<dbReference type="NCBIfam" id="NF003843">
    <property type="entry name" value="PRK05422.1"/>
    <property type="match status" value="1"/>
</dbReference>
<dbReference type="NCBIfam" id="TIGR00086">
    <property type="entry name" value="smpB"/>
    <property type="match status" value="1"/>
</dbReference>
<dbReference type="PANTHER" id="PTHR30308:SF2">
    <property type="entry name" value="SSRA-BINDING PROTEIN"/>
    <property type="match status" value="1"/>
</dbReference>
<dbReference type="PANTHER" id="PTHR30308">
    <property type="entry name" value="TMRNA-BINDING COMPONENT OF TRANS-TRANSLATION TAGGING COMPLEX"/>
    <property type="match status" value="1"/>
</dbReference>
<dbReference type="Pfam" id="PF01668">
    <property type="entry name" value="SmpB"/>
    <property type="match status" value="1"/>
</dbReference>
<dbReference type="SUPFAM" id="SSF74982">
    <property type="entry name" value="Small protein B (SmpB)"/>
    <property type="match status" value="1"/>
</dbReference>
<dbReference type="PROSITE" id="PS01317">
    <property type="entry name" value="SSRP"/>
    <property type="match status" value="1"/>
</dbReference>
<accession>Q0B075</accession>
<evidence type="ECO:0000255" key="1">
    <source>
        <dbReference type="HAMAP-Rule" id="MF_00023"/>
    </source>
</evidence>
<gene>
    <name evidence="1" type="primary">smpB</name>
    <name type="ordered locus">Swol_0281</name>
</gene>
<protein>
    <recommendedName>
        <fullName evidence="1">SsrA-binding protein</fullName>
    </recommendedName>
    <alternativeName>
        <fullName evidence="1">Small protein B</fullName>
    </alternativeName>
</protein>